<feature type="transit peptide" description="Mitochondrion" evidence="2">
    <location>
        <begin position="1"/>
        <end position="31"/>
    </location>
</feature>
<feature type="chain" id="PRO_0000458101" description="Hydroperoxide bicyclase CYP5164A3, mitochondrial">
    <location>
        <begin position="32"/>
        <end position="510"/>
    </location>
</feature>
<feature type="binding site" description="axial binding residue" evidence="1">
    <location>
        <position position="452"/>
    </location>
    <ligand>
        <name>heme</name>
        <dbReference type="ChEBI" id="CHEBI:30413"/>
    </ligand>
    <ligandPart>
        <name>Fe</name>
        <dbReference type="ChEBI" id="CHEBI:18248"/>
    </ligandPart>
</feature>
<protein>
    <recommendedName>
        <fullName evidence="4">Hydroperoxide bicyclase CYP5164A3, mitochondrial</fullName>
        <shortName evidence="4">EsHPB</shortName>
        <ecNumber evidence="3">4.2.1.-</ecNumber>
    </recommendedName>
    <alternativeName>
        <fullName evidence="5">Cytochrome P450 5164A3</fullName>
    </alternativeName>
</protein>
<sequence length="510" mass="56711">MQRVGAASPTCSSLQAPAAAPPILTISPHHRVKTAETAAEPDLLEPTGVHHPFHSLSPLTEARAWAAREGQYFNGLIEANGGASVSKGHPDLAVTFLTDHASCEWFFSQRQEVLDRQDGAYFGPLKCKKQYIGESLPTLASNQKESHQVLREHKLRVFRSRVPFAQSAMTNATDTFYKNLRDNGTGDYTVVYDFFLQQTIHFLHEWIYGLGVEGGQPLPPFKDFMNANPLDVSVLLELEMDTPVANLAAKLAQRSKKPSAEQLASVESIAEAIRSSDVWAGFVEMLEDSNVNTKDLERSFMFTTNFQSAGAIAKGMMPVVATLTNNPEFLEKLRKEVDGKDLTFQSIRGAENFPLLDSFHWEINRMFPAPAFTVKEAKMDLVVPTSSGKKYKVKKGELLMMEQALGQMDPSVFGPDAREFNPERFVDNPELKKKVFAYGYVDHDKVDGQWGCAAHAIGMLDGILKIIYGRWVQEAEWELTSVPVISPDEFLAEVGPADMSFAKVTSRKKM</sequence>
<keyword id="KW-0275">Fatty acid biosynthesis</keyword>
<keyword id="KW-0276">Fatty acid metabolism</keyword>
<keyword id="KW-0408">Iron</keyword>
<keyword id="KW-0444">Lipid biosynthesis</keyword>
<keyword id="KW-0443">Lipid metabolism</keyword>
<keyword id="KW-0456">Lyase</keyword>
<keyword id="KW-0479">Metal-binding</keyword>
<keyword id="KW-0496">Mitochondrion</keyword>
<keyword id="KW-0925">Oxylipin biosynthesis</keyword>
<keyword id="KW-1185">Reference proteome</keyword>
<keyword id="KW-0809">Transit peptide</keyword>
<proteinExistence type="evidence at protein level"/>
<comment type="function">
    <text evidence="3">Cytochrome P450 hydroperoxide bicyclase involved in the metabolism of oxylipins 'ectocarpins' natural products, such as hybridalactone, ecklonilactones and derivatives (PubMed:35835431). Isomerizes the hydroperoxides into epoxyalcohols via epoxyallylic radical (PubMed:35835431). Can use alpha-linolenic acid 13(S)-hydroperoxide (13-HPOTE) and eicosapentaenoic acid 15(S)-hydroperoxide (15-HPEPE) as preferred substrate to produce corresponding heterobicyclic oxylipins, such as plasmodiophorol A (6-oxabicyclo[3.1.0]hexane), plasmodiophorol B (2-oxabicyclo[2.2.1]heptane) and plasmodiophorol C (4-hydroxymethyl-1,2-dihydroxycyclopentane) as well as ectocarpin A (3-propenyl-6-oxabicyclo[3.1.0]hexane) formed at about 15:3:3:1 ratio for 13-HPOTE, and analogous to plasmodiophorols A and B including ectocarpin B (3-[(1'E)-propenyl]-6-oxabicyclo[3.1.0]hexane), ectocarpin C, 14-oxo-15-hydroxy-5,8,11,17-eicosate-traenoic acid and ectocarpin D for 15-HPEPE (PubMed:35835431). Barely able to use linoleic acid 13-hydroperoxide (13-HPODE), linoleic acid 9-hydroperoxide (9-HPODE), eicosapentaenoic acid 15-hydroperoxide (15-HPEPE), and alpha-linolenic acid 9-hydroperoxide (9-HPOTE) as substrates (PubMed:35835431).</text>
</comment>
<comment type="catalytic activity">
    <reaction evidence="3">
        <text>(13S)-hydroperoxy-(9Z,11E,15Z)-octadecatrienoate = plasmodiophorol A</text>
        <dbReference type="Rhea" id="RHEA:75603"/>
        <dbReference type="ChEBI" id="CHEBI:58757"/>
        <dbReference type="ChEBI" id="CHEBI:194366"/>
    </reaction>
    <physiologicalReaction direction="left-to-right" evidence="3">
        <dbReference type="Rhea" id="RHEA:75604"/>
    </physiologicalReaction>
</comment>
<comment type="catalytic activity">
    <reaction evidence="3">
        <text>(13S)-hydroperoxy-(9Z,11E,15Z)-octadecatrienoate = plasmodiophorol B</text>
        <dbReference type="Rhea" id="RHEA:75607"/>
        <dbReference type="ChEBI" id="CHEBI:58757"/>
        <dbReference type="ChEBI" id="CHEBI:194367"/>
    </reaction>
    <physiologicalReaction direction="left-to-right" evidence="3">
        <dbReference type="Rhea" id="RHEA:75608"/>
    </physiologicalReaction>
</comment>
<comment type="catalytic activity">
    <reaction evidence="3">
        <text>(13S)-hydroperoxy-(9Z,11E,15Z)-octadecatrienoate = ectocarpin A + H2O</text>
        <dbReference type="Rhea" id="RHEA:75599"/>
        <dbReference type="ChEBI" id="CHEBI:15377"/>
        <dbReference type="ChEBI" id="CHEBI:58757"/>
        <dbReference type="ChEBI" id="CHEBI:194362"/>
    </reaction>
    <physiologicalReaction direction="left-to-right" evidence="3">
        <dbReference type="Rhea" id="RHEA:75600"/>
    </physiologicalReaction>
</comment>
<comment type="catalytic activity">
    <reaction evidence="3">
        <text>(15S)-hydroperoxy-(5Z,8Z,11Z,13E,17Z)-eicosapentaenoate = ectocarpin B + H2O</text>
        <dbReference type="Rhea" id="RHEA:75615"/>
        <dbReference type="ChEBI" id="CHEBI:15377"/>
        <dbReference type="ChEBI" id="CHEBI:194363"/>
        <dbReference type="ChEBI" id="CHEBI:194369"/>
    </reaction>
    <physiologicalReaction direction="left-to-right" evidence="3">
        <dbReference type="Rhea" id="RHEA:75616"/>
    </physiologicalReaction>
</comment>
<comment type="catalytic activity">
    <reaction evidence="3">
        <text>(15S)-hydroperoxy-(5Z,8Z,11Z,13E,17Z)-eicosapentaenoate = ectocarpin C</text>
        <dbReference type="Rhea" id="RHEA:75619"/>
        <dbReference type="ChEBI" id="CHEBI:194364"/>
        <dbReference type="ChEBI" id="CHEBI:194369"/>
    </reaction>
    <physiologicalReaction direction="left-to-right" evidence="3">
        <dbReference type="Rhea" id="RHEA:75620"/>
    </physiologicalReaction>
</comment>
<comment type="catalytic activity">
    <reaction evidence="3">
        <text>(15S)-hydroperoxy-(5Z,8Z,11Z,13E,17Z)-eicosapentaenoate + H2O = ectocarpin D</text>
        <dbReference type="Rhea" id="RHEA:75627"/>
        <dbReference type="ChEBI" id="CHEBI:15377"/>
        <dbReference type="ChEBI" id="CHEBI:194365"/>
        <dbReference type="ChEBI" id="CHEBI:194369"/>
    </reaction>
    <physiologicalReaction direction="left-to-right" evidence="3">
        <dbReference type="Rhea" id="RHEA:75628"/>
    </physiologicalReaction>
</comment>
<comment type="catalytic activity">
    <reaction evidence="3">
        <text>(15S)-hydroperoxy-(5Z,8Z,11Z,13E,17Z)-eicosapentaenoate = 14-oxo-15-hydroxy-(5Z,8Z,11Z,17Z)-eicosatetraenoate</text>
        <dbReference type="Rhea" id="RHEA:75623"/>
        <dbReference type="ChEBI" id="CHEBI:194369"/>
        <dbReference type="ChEBI" id="CHEBI:194370"/>
    </reaction>
    <physiologicalReaction direction="left-to-right" evidence="3">
        <dbReference type="Rhea" id="RHEA:75624"/>
    </physiologicalReaction>
</comment>
<comment type="cofactor">
    <cofactor evidence="1">
        <name>heme</name>
        <dbReference type="ChEBI" id="CHEBI:30413"/>
    </cofactor>
</comment>
<comment type="biophysicochemical properties">
    <kinetics>
        <KM evidence="3">133.3 uM for 13-HPOTE</KM>
        <KM evidence="3">183 uM for 15-HPEPE</KM>
        <text evidence="3">kcat is 1446.7 sec(-1) with 13-HPOTE as substrate (PubMed:35835431). kcat is 1134.7 sec(-1) with 15-HPEPE as substrate (PubMed:35835431).</text>
    </kinetics>
    <phDependence>
        <text evidence="3">Optimum pH is 7.5.</text>
    </phDependence>
</comment>
<comment type="pathway">
    <text evidence="3">Lipid metabolism; oxylipin biosynthesis.</text>
</comment>
<comment type="subcellular location">
    <subcellularLocation>
        <location evidence="2">Mitochondrion</location>
    </subcellularLocation>
</comment>
<comment type="similarity">
    <text evidence="5">Belongs to the cytochrome P450 family.</text>
</comment>
<comment type="sequence caution" evidence="5">
    <conflict type="erroneous gene model prediction">
        <sequence resource="EMBL-CDS" id="CBN74954"/>
    </conflict>
</comment>
<comment type="sequence caution" evidence="5">
    <conflict type="erroneous gene model prediction">
        <sequence resource="EMBL-CDS" id="CBN74956"/>
    </conflict>
</comment>
<gene>
    <name evidence="4" type="primary">HPB</name>
    <name evidence="4" type="synonym">CYP5164A3</name>
    <name evidence="6" type="ORF">Esi_0060_0076</name>
    <name evidence="7" type="ORF">Esi_0060_0078</name>
</gene>
<name>HPB_ECTSI</name>
<organism>
    <name type="scientific">Ectocarpus siliculosus</name>
    <name type="common">Brown alga</name>
    <name type="synonym">Conferva siliculosa</name>
    <dbReference type="NCBI Taxonomy" id="2880"/>
    <lineage>
        <taxon>Eukaryota</taxon>
        <taxon>Sar</taxon>
        <taxon>Stramenopiles</taxon>
        <taxon>Ochrophyta</taxon>
        <taxon>PX clade</taxon>
        <taxon>Phaeophyceae</taxon>
        <taxon>Ectocarpales</taxon>
        <taxon>Ectocarpaceae</taxon>
        <taxon>Ectocarpus</taxon>
    </lineage>
</organism>
<dbReference type="EC" id="4.2.1.-" evidence="3"/>
<dbReference type="EMBL" id="FN648819">
    <property type="protein sequence ID" value="CBN74954.1"/>
    <property type="status" value="ALT_SEQ"/>
    <property type="molecule type" value="Genomic_DNA"/>
</dbReference>
<dbReference type="EMBL" id="FN648819">
    <property type="protein sequence ID" value="CBN74956.1"/>
    <property type="status" value="ALT_SEQ"/>
    <property type="molecule type" value="Genomic_DNA"/>
</dbReference>
<dbReference type="SMR" id="D8LQS7"/>
<dbReference type="STRING" id="2880.D8LQS9"/>
<dbReference type="EnsemblProtists" id="CBN74954">
    <property type="protein sequence ID" value="CBN74954"/>
    <property type="gene ID" value="Esi_0060_0076"/>
</dbReference>
<dbReference type="EnsemblProtists" id="CBN74956">
    <property type="protein sequence ID" value="CBN74956"/>
    <property type="gene ID" value="Esi_0060_0078"/>
</dbReference>
<dbReference type="OrthoDB" id="10399817at2759"/>
<dbReference type="UniPathway" id="UPA00382"/>
<dbReference type="Proteomes" id="UP000002630">
    <property type="component" value="Linkage Group LG25"/>
</dbReference>
<dbReference type="GO" id="GO:0005739">
    <property type="term" value="C:mitochondrion"/>
    <property type="evidence" value="ECO:0007669"/>
    <property type="project" value="UniProtKB-SubCell"/>
</dbReference>
<dbReference type="GO" id="GO:0020037">
    <property type="term" value="F:heme binding"/>
    <property type="evidence" value="ECO:0007669"/>
    <property type="project" value="InterPro"/>
</dbReference>
<dbReference type="GO" id="GO:0005506">
    <property type="term" value="F:iron ion binding"/>
    <property type="evidence" value="ECO:0007669"/>
    <property type="project" value="InterPro"/>
</dbReference>
<dbReference type="GO" id="GO:0016829">
    <property type="term" value="F:lyase activity"/>
    <property type="evidence" value="ECO:0007669"/>
    <property type="project" value="UniProtKB-KW"/>
</dbReference>
<dbReference type="GO" id="GO:0004497">
    <property type="term" value="F:monooxygenase activity"/>
    <property type="evidence" value="ECO:0007669"/>
    <property type="project" value="InterPro"/>
</dbReference>
<dbReference type="GO" id="GO:0016705">
    <property type="term" value="F:oxidoreductase activity, acting on paired donors, with incorporation or reduction of molecular oxygen"/>
    <property type="evidence" value="ECO:0007669"/>
    <property type="project" value="InterPro"/>
</dbReference>
<dbReference type="GO" id="GO:0006633">
    <property type="term" value="P:fatty acid biosynthetic process"/>
    <property type="evidence" value="ECO:0007669"/>
    <property type="project" value="UniProtKB-KW"/>
</dbReference>
<dbReference type="GO" id="GO:0031408">
    <property type="term" value="P:oxylipin biosynthetic process"/>
    <property type="evidence" value="ECO:0007669"/>
    <property type="project" value="UniProtKB-UniPathway"/>
</dbReference>
<dbReference type="GO" id="GO:0016125">
    <property type="term" value="P:sterol metabolic process"/>
    <property type="evidence" value="ECO:0007669"/>
    <property type="project" value="TreeGrafter"/>
</dbReference>
<dbReference type="Gene3D" id="1.10.630.10">
    <property type="entry name" value="Cytochrome P450"/>
    <property type="match status" value="1"/>
</dbReference>
<dbReference type="InterPro" id="IPR001128">
    <property type="entry name" value="Cyt_P450"/>
</dbReference>
<dbReference type="InterPro" id="IPR036396">
    <property type="entry name" value="Cyt_P450_sf"/>
</dbReference>
<dbReference type="PANTHER" id="PTHR24286:SF255">
    <property type="entry name" value="ALLENE OXIDE SYNTHASE, CHLOROPLASTIC"/>
    <property type="match status" value="1"/>
</dbReference>
<dbReference type="PANTHER" id="PTHR24286">
    <property type="entry name" value="CYTOCHROME P450 26"/>
    <property type="match status" value="1"/>
</dbReference>
<dbReference type="Pfam" id="PF00067">
    <property type="entry name" value="p450"/>
    <property type="match status" value="1"/>
</dbReference>
<dbReference type="SUPFAM" id="SSF48264">
    <property type="entry name" value="Cytochrome P450"/>
    <property type="match status" value="1"/>
</dbReference>
<evidence type="ECO:0000250" key="1">
    <source>
        <dbReference type="UniProtKB" id="Q96242"/>
    </source>
</evidence>
<evidence type="ECO:0000255" key="2"/>
<evidence type="ECO:0000269" key="3">
    <source>
    </source>
</evidence>
<evidence type="ECO:0000303" key="4">
    <source>
    </source>
</evidence>
<evidence type="ECO:0000305" key="5"/>
<evidence type="ECO:0000312" key="6">
    <source>
        <dbReference type="EMBL" id="CBN74954.1"/>
    </source>
</evidence>
<evidence type="ECO:0000312" key="7">
    <source>
        <dbReference type="EMBL" id="CBN74956.1"/>
    </source>
</evidence>
<reference key="1">
    <citation type="journal article" date="2010" name="Nature">
        <title>The Ectocarpus genome and the independent evolution of multicellularity in brown algae.</title>
        <authorList>
            <person name="Cock J.M."/>
            <person name="Sterck L."/>
            <person name="Rouze P."/>
            <person name="Scornet D."/>
            <person name="Allen A.E."/>
            <person name="Amoutzias G."/>
            <person name="Anthouard V."/>
            <person name="Artiguenave F."/>
            <person name="Aury J.M."/>
            <person name="Badger J.H."/>
            <person name="Beszteri B."/>
            <person name="Billiau K."/>
            <person name="Bonnet E."/>
            <person name="Bothwell J.H."/>
            <person name="Bowler C."/>
            <person name="Boyen C."/>
            <person name="Brownlee C."/>
            <person name="Carrano C.J."/>
            <person name="Charrier B."/>
            <person name="Cho G.Y."/>
            <person name="Coelho S.M."/>
            <person name="Collen J."/>
            <person name="Corre E."/>
            <person name="Da Silva C."/>
            <person name="Delage L."/>
            <person name="Delaroque N."/>
            <person name="Dittami S.M."/>
            <person name="Doulbeau S."/>
            <person name="Elias M."/>
            <person name="Farnham G."/>
            <person name="Gachon C.M."/>
            <person name="Gschloessl B."/>
            <person name="Heesch S."/>
            <person name="Jabbari K."/>
            <person name="Jubin C."/>
            <person name="Kawai H."/>
            <person name="Kimura K."/>
            <person name="Kloareg B."/>
            <person name="Kupper F.C."/>
            <person name="Lang D."/>
            <person name="Le Bail A."/>
            <person name="Leblanc C."/>
            <person name="Lerouge P."/>
            <person name="Lohr M."/>
            <person name="Lopez P.J."/>
            <person name="Martens C."/>
            <person name="Maumus F."/>
            <person name="Michel G."/>
            <person name="Miranda-Saavedra D."/>
            <person name="Morales J."/>
            <person name="Moreau H."/>
            <person name="Motomura T."/>
            <person name="Nagasato C."/>
            <person name="Napoli C.A."/>
            <person name="Nelson D.R."/>
            <person name="Nyvall-Collen P."/>
            <person name="Peters A.F."/>
            <person name="Pommier C."/>
            <person name="Potin P."/>
            <person name="Poulain J."/>
            <person name="Quesneville H."/>
            <person name="Read B."/>
            <person name="Rensing S.A."/>
            <person name="Ritter A."/>
            <person name="Rousvoal S."/>
            <person name="Samanta M."/>
            <person name="Samson G."/>
            <person name="Schroeder D.C."/>
            <person name="Segurens B."/>
            <person name="Strittmatter M."/>
            <person name="Tonon T."/>
            <person name="Tregear J.W."/>
            <person name="Valentin K."/>
            <person name="von Dassow P."/>
            <person name="Yamagishi T."/>
            <person name="Van de Peer Y."/>
            <person name="Wincker P."/>
        </authorList>
    </citation>
    <scope>NUCLEOTIDE SEQUENCE [LARGE SCALE GENOMIC DNA]</scope>
    <source>
        <strain>Ec32 / CCAP1310/4</strain>
    </source>
</reference>
<reference key="2">
    <citation type="journal article" date="2022" name="Biochim. Biophys. Acta">
        <title>Lipoxygenase pathway in brown algae: The biosynthesis of novel oxylipins 'ectocarpins' by hydroperoxide bicyclase CYP5164A3 of Ectocarpus siliculosus.</title>
        <authorList>
            <person name="Toporkova Y.Y."/>
            <person name="Smirnova E.O."/>
            <person name="Mukhtarova L.S."/>
            <person name="Grechkin A.N."/>
        </authorList>
    </citation>
    <scope>FUNCTION</scope>
    <scope>CATALYTIC ACTIVITY</scope>
    <scope>PATHWAY</scope>
    <scope>BIOPHYSICOCHEMICAL PROPERTIES</scope>
</reference>
<accession>D8LQS7</accession>
<accession>D8LQS9</accession>